<sequence length="123" mass="14131">MQNKIQVKSVEKRENALIFCAENSEIEVKGLSARNHVLVDSDNLSFLYILENESSFIYVSIPHTCWEAMHEAMNNDVVMFVRVNDIEMELEGLKEEVEYLVENIEGNANYGEELVTAVEKVFL</sequence>
<organism>
    <name type="scientific">Bacillus cereus (strain 03BB102)</name>
    <dbReference type="NCBI Taxonomy" id="572264"/>
    <lineage>
        <taxon>Bacteria</taxon>
        <taxon>Bacillati</taxon>
        <taxon>Bacillota</taxon>
        <taxon>Bacilli</taxon>
        <taxon>Bacillales</taxon>
        <taxon>Bacillaceae</taxon>
        <taxon>Bacillus</taxon>
        <taxon>Bacillus cereus group</taxon>
    </lineage>
</organism>
<reference key="1">
    <citation type="submission" date="2009-02" db="EMBL/GenBank/DDBJ databases">
        <title>Genome sequence of Bacillus cereus 03BB102.</title>
        <authorList>
            <person name="Dodson R.J."/>
            <person name="Jackson P."/>
            <person name="Munk A.C."/>
            <person name="Brettin T."/>
            <person name="Bruce D."/>
            <person name="Detter C."/>
            <person name="Tapia R."/>
            <person name="Han C."/>
            <person name="Sutton G."/>
            <person name="Sims D."/>
        </authorList>
    </citation>
    <scope>NUCLEOTIDE SEQUENCE [LARGE SCALE GENOMIC DNA]</scope>
    <source>
        <strain>03BB102</strain>
    </source>
</reference>
<evidence type="ECO:0000255" key="1">
    <source>
        <dbReference type="HAMAP-Rule" id="MF_01861"/>
    </source>
</evidence>
<comment type="similarity">
    <text evidence="1">Belongs to the UPF0738 family.</text>
</comment>
<name>Y1242_BACC3</name>
<feature type="chain" id="PRO_1000188708" description="UPF0738 protein BCA_1242">
    <location>
        <begin position="1"/>
        <end position="123"/>
    </location>
</feature>
<dbReference type="EMBL" id="CP001407">
    <property type="protein sequence ID" value="ACO30338.1"/>
    <property type="molecule type" value="Genomic_DNA"/>
</dbReference>
<dbReference type="RefSeq" id="WP_001180009.1">
    <property type="nucleotide sequence ID" value="NZ_CP009318.1"/>
</dbReference>
<dbReference type="KEGG" id="bcx:BCA_1242"/>
<dbReference type="PATRIC" id="fig|572264.18.peg.1193"/>
<dbReference type="Proteomes" id="UP000002210">
    <property type="component" value="Chromosome"/>
</dbReference>
<dbReference type="HAMAP" id="MF_01861">
    <property type="entry name" value="UPF0738"/>
    <property type="match status" value="1"/>
</dbReference>
<dbReference type="InterPro" id="IPR020908">
    <property type="entry name" value="UPF0738"/>
</dbReference>
<dbReference type="Pfam" id="PF19785">
    <property type="entry name" value="UPF0738"/>
    <property type="match status" value="1"/>
</dbReference>
<accession>C1ELB0</accession>
<gene>
    <name type="ordered locus">BCA_1242</name>
</gene>
<proteinExistence type="inferred from homology"/>
<protein>
    <recommendedName>
        <fullName evidence="1">UPF0738 protein BCA_1242</fullName>
    </recommendedName>
</protein>